<comment type="function">
    <text evidence="1">Minor protein of the capsid that localizes along the inner surface of the virion, within the central cavities beneath the L1 pentamers. Plays a role in capsid stabilization through interaction with the major capsid protein L1. Once the virion enters the host cell, L2 escorts the genomic DNA into the nucleus by promoting escape from the endosomal compartments and traffic through the host Golgi network. Mechanistically, the C-terminus of L2 possesses a cell-penetrating peptide that protudes from the host endosome, interacts with host cytoplasmic retromer cargo and thereby mediates the capsid delivery to the host trans-Golgi network. Plays a role through its interaction with host dynein in the intracellular microtubule-dependent transport of viral capsid toward the nucleus. Mediates the viral genome import into the nucleus through binding to host importins. Once within the nucleus, L2 localizes viral genomes to host PML bodies in order to activate early gene expression for establishment of infection. Later on, promotes late gene expression by interacting with the viral E2 protein and by inhibiting its transcriptional activation functions. During virion assembly, encapsidates the genome by direct interaction with the viral DNA.</text>
</comment>
<comment type="subunit">
    <text evidence="1">Interacts with major capsid protein L1. Interacts with E2; this interaction inhibits E2 transcriptional activity but not the DNA replication function E2. Interacts with host GADD45GIP1. Interacts with host HSPA8; this interaction is required for L2 nuclear translocation. Interacts with host importins KPNB2 and KPNB3. Forms a complex with importin alpha2-beta1 heterodimers via interaction with the importin alpha2 adapter. Interacts with host DYNLT1; this interaction is essential for virus intracellular transport during entry. Interacts (via C-terminus) with host retromer subunits VPS35 and VPS29.</text>
</comment>
<comment type="subcellular location">
    <subcellularLocation>
        <location evidence="1">Virion</location>
    </subcellularLocation>
    <subcellularLocation>
        <location evidence="1">Host nucleus</location>
    </subcellularLocation>
    <subcellularLocation>
        <location evidence="1">Host early endosome</location>
    </subcellularLocation>
    <subcellularLocation>
        <location evidence="1">Host Golgi apparatus</location>
    </subcellularLocation>
</comment>
<comment type="PTM">
    <text evidence="1">Highly phosphorylated.</text>
</comment>
<comment type="similarity">
    <text evidence="1">Belongs to the papillomaviridae L2 protein family.</text>
</comment>
<proteinExistence type="inferred from homology"/>
<organismHost>
    <name type="scientific">Homo sapiens</name>
    <name type="common">Human</name>
    <dbReference type="NCBI Taxonomy" id="9606"/>
</organismHost>
<feature type="chain" id="PRO_0000133633" description="Minor capsid protein L2">
    <location>
        <begin position="1"/>
        <end position="466"/>
    </location>
</feature>
<feature type="short sequence motif" description="Nuclear localization signal" evidence="1">
    <location>
        <begin position="1"/>
        <end position="12"/>
    </location>
</feature>
<feature type="short sequence motif" description="Nuclear localization signal" evidence="1">
    <location>
        <begin position="447"/>
        <end position="455"/>
    </location>
</feature>
<feature type="disulfide bond" evidence="1">
    <location>
        <begin position="21"/>
        <end position="27"/>
    </location>
</feature>
<dbReference type="EMBL" id="U21941">
    <property type="protein sequence ID" value="AAC54856.1"/>
    <property type="molecule type" value="Genomic_DNA"/>
</dbReference>
<dbReference type="Proteomes" id="UP000007677">
    <property type="component" value="Segment"/>
</dbReference>
<dbReference type="GO" id="GO:0043657">
    <property type="term" value="C:host cell"/>
    <property type="evidence" value="ECO:0007669"/>
    <property type="project" value="GOC"/>
</dbReference>
<dbReference type="GO" id="GO:0044174">
    <property type="term" value="C:host cell endosome"/>
    <property type="evidence" value="ECO:0007669"/>
    <property type="project" value="UniProtKB-KW"/>
</dbReference>
<dbReference type="GO" id="GO:0044177">
    <property type="term" value="C:host cell Golgi apparatus"/>
    <property type="evidence" value="ECO:0007669"/>
    <property type="project" value="UniProtKB-SubCell"/>
</dbReference>
<dbReference type="GO" id="GO:0042025">
    <property type="term" value="C:host cell nucleus"/>
    <property type="evidence" value="ECO:0007669"/>
    <property type="project" value="UniProtKB-SubCell"/>
</dbReference>
<dbReference type="GO" id="GO:0019028">
    <property type="term" value="C:viral capsid"/>
    <property type="evidence" value="ECO:0007669"/>
    <property type="project" value="UniProtKB-UniRule"/>
</dbReference>
<dbReference type="GO" id="GO:0003677">
    <property type="term" value="F:DNA binding"/>
    <property type="evidence" value="ECO:0007669"/>
    <property type="project" value="UniProtKB-UniRule"/>
</dbReference>
<dbReference type="GO" id="GO:0005198">
    <property type="term" value="F:structural molecule activity"/>
    <property type="evidence" value="ECO:0007669"/>
    <property type="project" value="UniProtKB-UniRule"/>
</dbReference>
<dbReference type="GO" id="GO:0075521">
    <property type="term" value="P:microtubule-dependent intracellular transport of viral material towards nucleus"/>
    <property type="evidence" value="ECO:0007669"/>
    <property type="project" value="UniProtKB-UniRule"/>
</dbReference>
<dbReference type="GO" id="GO:0046718">
    <property type="term" value="P:symbiont entry into host cell"/>
    <property type="evidence" value="ECO:0007669"/>
    <property type="project" value="UniProtKB-KW"/>
</dbReference>
<dbReference type="GO" id="GO:0075732">
    <property type="term" value="P:viral penetration into host nucleus"/>
    <property type="evidence" value="ECO:0007669"/>
    <property type="project" value="UniProtKB-KW"/>
</dbReference>
<dbReference type="HAMAP" id="MF_04003">
    <property type="entry name" value="PPV_L2"/>
    <property type="match status" value="1"/>
</dbReference>
<dbReference type="InterPro" id="IPR000784">
    <property type="entry name" value="Late_L2"/>
</dbReference>
<dbReference type="Pfam" id="PF00513">
    <property type="entry name" value="Late_protein_L2"/>
    <property type="match status" value="1"/>
</dbReference>
<protein>
    <recommendedName>
        <fullName evidence="1">Minor capsid protein L2</fullName>
    </recommendedName>
</protein>
<keyword id="KW-0167">Capsid protein</keyword>
<keyword id="KW-1176">Cytoplasmic inwards viral transport</keyword>
<keyword id="KW-1015">Disulfide bond</keyword>
<keyword id="KW-0238">DNA-binding</keyword>
<keyword id="KW-1039">Host endosome</keyword>
<keyword id="KW-1040">Host Golgi apparatus</keyword>
<keyword id="KW-1048">Host nucleus</keyword>
<keyword id="KW-0945">Host-virus interaction</keyword>
<keyword id="KW-0426">Late protein</keyword>
<keyword id="KW-1177">Microtubular inwards viral transport</keyword>
<keyword id="KW-0597">Phosphoprotein</keyword>
<keyword id="KW-1185">Reference proteome</keyword>
<keyword id="KW-1163">Viral penetration into host nucleus</keyword>
<keyword id="KW-0946">Virion</keyword>
<keyword id="KW-1160">Virus entry into host cell</keyword>
<evidence type="ECO:0000255" key="1">
    <source>
        <dbReference type="HAMAP-Rule" id="MF_04003"/>
    </source>
</evidence>
<organism>
    <name type="scientific">Human papillomavirus type 70</name>
    <dbReference type="NCBI Taxonomy" id="39457"/>
    <lineage>
        <taxon>Viruses</taxon>
        <taxon>Monodnaviria</taxon>
        <taxon>Shotokuvirae</taxon>
        <taxon>Cossaviricota</taxon>
        <taxon>Papovaviricetes</taxon>
        <taxon>Zurhausenvirales</taxon>
        <taxon>Papillomaviridae</taxon>
        <taxon>Firstpapillomavirinae</taxon>
        <taxon>Alphapapillomavirus</taxon>
        <taxon>Alphapapillomavirus 7</taxon>
    </lineage>
</organism>
<name>VL2_HPV70</name>
<reference key="1">
    <citation type="journal article" date="1996" name="J. Clin. Microbiol.">
        <title>Human papillomavirus type 70 genome cloned from overlapping PCR products: complete nucleotide sequence and genomic organization.</title>
        <authorList>
            <person name="Forslund O."/>
            <person name="Hansson B.G."/>
        </authorList>
    </citation>
    <scope>NUCLEOTIDE SEQUENCE [GENOMIC DNA]</scope>
</reference>
<accession>P50801</accession>
<gene>
    <name evidence="1" type="primary">L2</name>
</gene>
<sequence>MVSSRASRRKRASATDIYKTCKQSGTCPPDVVNKVEGTTLADRFLQWASLGIFLGGLGIGTGTGTGGRTGYIPLGGRPSTVVDVTPARPPVVIEPVGPTEPSIVQLVEESSVVSSGTPIPTFTGTSGFEITSSATTTPAVLDITPASGSVQISTTSYTNPAFADPSLIEVPQTGEVSGNIFVTTPTSGTHGYEEIPMQVFASHGTGTEPISSTPVPGVSRVAGPRLYSRAYHQVRVNNFDFVTRPSSFVTFDNPAFEPGDTSLTFEPADTAPDPDFLDIVRLHRPALTSRRGTVRFSRLGKKATMFTRRGTQIGAQVHYYHDISNITATEDIEMQPLLTSESTDGLYDIYADADIDNAMLHTTSHTGSTGPRSHLSFPSIPSTVSTKYSNTTIPFTTSWDIPVTTGPDIVLPTASPNLPFVPPTSIDTTVAIAIQGSNYYLLPLLYYFLKKRKRIPYFFTDGFVAV</sequence>